<sequence>MQVYQCCEAIRIAYNQIGSGEQGYVPQAIAATIRALNAVASDERVPAELRQEAAYAAANLLISDHQDA</sequence>
<reference key="1">
    <citation type="journal article" date="2008" name="BMC Genomics">
        <title>The genome of Aeromonas salmonicida subsp. salmonicida A449: insights into the evolution of a fish pathogen.</title>
        <authorList>
            <person name="Reith M.E."/>
            <person name="Singh R.K."/>
            <person name="Curtis B."/>
            <person name="Boyd J.M."/>
            <person name="Bouevitch A."/>
            <person name="Kimball J."/>
            <person name="Munholland J."/>
            <person name="Murphy C."/>
            <person name="Sarty D."/>
            <person name="Williams J."/>
            <person name="Nash J.H."/>
            <person name="Johnson S.C."/>
            <person name="Brown L.L."/>
        </authorList>
    </citation>
    <scope>NUCLEOTIDE SEQUENCE [LARGE SCALE GENOMIC DNA]</scope>
    <source>
        <strain>A449</strain>
    </source>
</reference>
<name>Y2184_AERS4</name>
<organism>
    <name type="scientific">Aeromonas salmonicida (strain A449)</name>
    <dbReference type="NCBI Taxonomy" id="382245"/>
    <lineage>
        <taxon>Bacteria</taxon>
        <taxon>Pseudomonadati</taxon>
        <taxon>Pseudomonadota</taxon>
        <taxon>Gammaproteobacteria</taxon>
        <taxon>Aeromonadales</taxon>
        <taxon>Aeromonadaceae</taxon>
        <taxon>Aeromonas</taxon>
    </lineage>
</organism>
<accession>A4SMX7</accession>
<feature type="chain" id="PRO_1000064498" description="UPF0253 protein ASA_2184">
    <location>
        <begin position="1"/>
        <end position="68"/>
    </location>
</feature>
<evidence type="ECO:0000255" key="1">
    <source>
        <dbReference type="HAMAP-Rule" id="MF_01064"/>
    </source>
</evidence>
<gene>
    <name type="ordered locus">ASA_2184</name>
</gene>
<comment type="similarity">
    <text evidence="1">Belongs to the UPF0253 family.</text>
</comment>
<proteinExistence type="inferred from homology"/>
<dbReference type="EMBL" id="CP000644">
    <property type="protein sequence ID" value="ABO90249.1"/>
    <property type="molecule type" value="Genomic_DNA"/>
</dbReference>
<dbReference type="RefSeq" id="WP_005311233.1">
    <property type="nucleotide sequence ID" value="NC_009348.1"/>
</dbReference>
<dbReference type="SMR" id="A4SMX7"/>
<dbReference type="STRING" id="29491.GCA_000820065_00453"/>
<dbReference type="KEGG" id="asa:ASA_2184"/>
<dbReference type="eggNOG" id="ENOG5032Z3X">
    <property type="taxonomic scope" value="Bacteria"/>
</dbReference>
<dbReference type="HOGENOM" id="CLU_190008_0_0_6"/>
<dbReference type="Proteomes" id="UP000000225">
    <property type="component" value="Chromosome"/>
</dbReference>
<dbReference type="HAMAP" id="MF_01064">
    <property type="entry name" value="UPF0253"/>
    <property type="match status" value="1"/>
</dbReference>
<dbReference type="InterPro" id="IPR009624">
    <property type="entry name" value="UPF0253"/>
</dbReference>
<dbReference type="NCBIfam" id="NF003436">
    <property type="entry name" value="PRK04964.1"/>
    <property type="match status" value="1"/>
</dbReference>
<dbReference type="Pfam" id="PF06786">
    <property type="entry name" value="UPF0253"/>
    <property type="match status" value="1"/>
</dbReference>
<protein>
    <recommendedName>
        <fullName evidence="1">UPF0253 protein ASA_2184</fullName>
    </recommendedName>
</protein>